<geneLocation type="mitochondrion"/>
<gene>
    <name type="primary">MT-ND4L</name>
    <name type="synonym">MTND4L</name>
    <name type="synonym">NADH4L</name>
    <name type="synonym">ND4L</name>
</gene>
<name>NU4LM_ROUAE</name>
<keyword id="KW-0249">Electron transport</keyword>
<keyword id="KW-0472">Membrane</keyword>
<keyword id="KW-0496">Mitochondrion</keyword>
<keyword id="KW-0999">Mitochondrion inner membrane</keyword>
<keyword id="KW-0520">NAD</keyword>
<keyword id="KW-0679">Respiratory chain</keyword>
<keyword id="KW-1278">Translocase</keyword>
<keyword id="KW-0812">Transmembrane</keyword>
<keyword id="KW-1133">Transmembrane helix</keyword>
<keyword id="KW-0813">Transport</keyword>
<keyword id="KW-0830">Ubiquinone</keyword>
<reference key="1">
    <citation type="submission" date="2005-02" db="EMBL/GenBank/DDBJ databases">
        <title>Phylogeography of Megachiroptera, Rousettus aegyptiacus, as inferred form mitochondria genome data.</title>
        <authorList>
            <person name="Omatsu T."/>
            <person name="Kikkawa Y."/>
            <person name="Ishii Y."/>
            <person name="Kyuwa S."/>
            <person name="Milanda E."/>
            <person name="Alan C."/>
            <person name="Yonekawa H."/>
            <person name="Yoshikawa Y."/>
        </authorList>
    </citation>
    <scope>NUCLEOTIDE SEQUENCE [GENOMIC DNA]</scope>
</reference>
<accession>Q401Y8</accession>
<dbReference type="EC" id="7.1.1.2"/>
<dbReference type="EMBL" id="AB205183">
    <property type="protein sequence ID" value="BAE20240.1"/>
    <property type="molecule type" value="Genomic_DNA"/>
</dbReference>
<dbReference type="RefSeq" id="YP_313613.1">
    <property type="nucleotide sequence ID" value="NC_007393.1"/>
</dbReference>
<dbReference type="SMR" id="Q401Y8"/>
<dbReference type="GeneID" id="3666161"/>
<dbReference type="KEGG" id="ray:3666161"/>
<dbReference type="CTD" id="4539"/>
<dbReference type="GO" id="GO:0005743">
    <property type="term" value="C:mitochondrial inner membrane"/>
    <property type="evidence" value="ECO:0000250"/>
    <property type="project" value="UniProtKB"/>
</dbReference>
<dbReference type="GO" id="GO:0045271">
    <property type="term" value="C:respiratory chain complex I"/>
    <property type="evidence" value="ECO:0000250"/>
    <property type="project" value="UniProtKB"/>
</dbReference>
<dbReference type="GO" id="GO:0008137">
    <property type="term" value="F:NADH dehydrogenase (ubiquinone) activity"/>
    <property type="evidence" value="ECO:0000250"/>
    <property type="project" value="UniProtKB"/>
</dbReference>
<dbReference type="GO" id="GO:0042773">
    <property type="term" value="P:ATP synthesis coupled electron transport"/>
    <property type="evidence" value="ECO:0007669"/>
    <property type="project" value="InterPro"/>
</dbReference>
<dbReference type="FunFam" id="1.10.287.3510:FF:000002">
    <property type="entry name" value="NADH-ubiquinone oxidoreductase chain 4L"/>
    <property type="match status" value="1"/>
</dbReference>
<dbReference type="Gene3D" id="1.10.287.3510">
    <property type="match status" value="1"/>
</dbReference>
<dbReference type="InterPro" id="IPR001133">
    <property type="entry name" value="NADH_UbQ_OxRdtase_chain4L/K"/>
</dbReference>
<dbReference type="InterPro" id="IPR039428">
    <property type="entry name" value="NUOK/Mnh_C1-like"/>
</dbReference>
<dbReference type="PANTHER" id="PTHR11434:SF0">
    <property type="entry name" value="NADH-UBIQUINONE OXIDOREDUCTASE CHAIN 4L"/>
    <property type="match status" value="1"/>
</dbReference>
<dbReference type="PANTHER" id="PTHR11434">
    <property type="entry name" value="NADH-UBIQUINONE OXIDOREDUCTASE SUBUNIT ND4L"/>
    <property type="match status" value="1"/>
</dbReference>
<dbReference type="Pfam" id="PF00420">
    <property type="entry name" value="Oxidored_q2"/>
    <property type="match status" value="1"/>
</dbReference>
<organism>
    <name type="scientific">Rousettus aegyptiacus</name>
    <name type="common">Egyptian fruit bat</name>
    <name type="synonym">Pteropus aegyptiacus</name>
    <dbReference type="NCBI Taxonomy" id="9407"/>
    <lineage>
        <taxon>Eukaryota</taxon>
        <taxon>Metazoa</taxon>
        <taxon>Chordata</taxon>
        <taxon>Craniata</taxon>
        <taxon>Vertebrata</taxon>
        <taxon>Euteleostomi</taxon>
        <taxon>Mammalia</taxon>
        <taxon>Eutheria</taxon>
        <taxon>Laurasiatheria</taxon>
        <taxon>Chiroptera</taxon>
        <taxon>Yinpterochiroptera</taxon>
        <taxon>Pteropodoidea</taxon>
        <taxon>Pteropodidae</taxon>
        <taxon>Rousettinae</taxon>
        <taxon>Rousettus</taxon>
    </lineage>
</organism>
<comment type="function">
    <text evidence="1">Core subunit of the mitochondrial membrane respiratory chain NADH dehydrogenase (Complex I) which catalyzes electron transfer from NADH through the respiratory chain, using ubiquinone as an electron acceptor. Part of the enzyme membrane arm which is embedded in the lipid bilayer and involved in proton translocation.</text>
</comment>
<comment type="catalytic activity">
    <reaction evidence="1">
        <text>a ubiquinone + NADH + 5 H(+)(in) = a ubiquinol + NAD(+) + 4 H(+)(out)</text>
        <dbReference type="Rhea" id="RHEA:29091"/>
        <dbReference type="Rhea" id="RHEA-COMP:9565"/>
        <dbReference type="Rhea" id="RHEA-COMP:9566"/>
        <dbReference type="ChEBI" id="CHEBI:15378"/>
        <dbReference type="ChEBI" id="CHEBI:16389"/>
        <dbReference type="ChEBI" id="CHEBI:17976"/>
        <dbReference type="ChEBI" id="CHEBI:57540"/>
        <dbReference type="ChEBI" id="CHEBI:57945"/>
        <dbReference type="EC" id="7.1.1.2"/>
    </reaction>
    <physiologicalReaction direction="left-to-right" evidence="1">
        <dbReference type="Rhea" id="RHEA:29092"/>
    </physiologicalReaction>
</comment>
<comment type="subunit">
    <text evidence="2">Core subunit of respiratory chain NADH dehydrogenase (Complex I) which is composed of 45 different subunits.</text>
</comment>
<comment type="subcellular location">
    <subcellularLocation>
        <location evidence="2">Mitochondrion inner membrane</location>
        <topology evidence="3">Multi-pass membrane protein</topology>
    </subcellularLocation>
</comment>
<comment type="similarity">
    <text evidence="4">Belongs to the complex I subunit 4L family.</text>
</comment>
<evidence type="ECO:0000250" key="1">
    <source>
        <dbReference type="UniProtKB" id="P03901"/>
    </source>
</evidence>
<evidence type="ECO:0000250" key="2">
    <source>
        <dbReference type="UniProtKB" id="P03902"/>
    </source>
</evidence>
<evidence type="ECO:0000255" key="3"/>
<evidence type="ECO:0000305" key="4"/>
<protein>
    <recommendedName>
        <fullName>NADH-ubiquinone oxidoreductase chain 4L</fullName>
        <ecNumber>7.1.1.2</ecNumber>
    </recommendedName>
    <alternativeName>
        <fullName>NADH dehydrogenase subunit 4L</fullName>
    </alternativeName>
</protein>
<proteinExistence type="inferred from homology"/>
<feature type="chain" id="PRO_0000275120" description="NADH-ubiquinone oxidoreductase chain 4L">
    <location>
        <begin position="1"/>
        <end position="98"/>
    </location>
</feature>
<feature type="transmembrane region" description="Helical" evidence="3">
    <location>
        <begin position="1"/>
        <end position="21"/>
    </location>
</feature>
<feature type="transmembrane region" description="Helical" evidence="3">
    <location>
        <begin position="29"/>
        <end position="49"/>
    </location>
</feature>
<feature type="transmembrane region" description="Helical" evidence="3">
    <location>
        <begin position="61"/>
        <end position="81"/>
    </location>
</feature>
<sequence length="98" mass="10736">MTLVYMNMALAFTISLLGLLMYRSHLMSSLLCLEGMMLSLFVTMAVTILNSHLILANMIPIILLVFAACEAALGLSLLVMVSNTYGVDHVQNLNLLQC</sequence>